<organism>
    <name type="scientific">Finegoldia magna (strain ATCC 29328 / DSM 20472 / WAL 2508)</name>
    <name type="common">Peptostreptococcus magnus</name>
    <dbReference type="NCBI Taxonomy" id="334413"/>
    <lineage>
        <taxon>Bacteria</taxon>
        <taxon>Bacillati</taxon>
        <taxon>Bacillota</taxon>
        <taxon>Tissierellia</taxon>
        <taxon>Tissierellales</taxon>
        <taxon>Peptoniphilaceae</taxon>
        <taxon>Finegoldia</taxon>
    </lineage>
</organism>
<comment type="function">
    <text evidence="1">DNA ligase that catalyzes the formation of phosphodiester linkages between 5'-phosphoryl and 3'-hydroxyl groups in double-stranded DNA using NAD as a coenzyme and as the energy source for the reaction. It is essential for DNA replication and repair of damaged DNA.</text>
</comment>
<comment type="catalytic activity">
    <reaction evidence="1">
        <text>NAD(+) + (deoxyribonucleotide)n-3'-hydroxyl + 5'-phospho-(deoxyribonucleotide)m = (deoxyribonucleotide)n+m + AMP + beta-nicotinamide D-nucleotide.</text>
        <dbReference type="EC" id="6.5.1.2"/>
    </reaction>
</comment>
<comment type="cofactor">
    <cofactor evidence="1">
        <name>Mg(2+)</name>
        <dbReference type="ChEBI" id="CHEBI:18420"/>
    </cofactor>
    <cofactor evidence="1">
        <name>Mn(2+)</name>
        <dbReference type="ChEBI" id="CHEBI:29035"/>
    </cofactor>
</comment>
<comment type="similarity">
    <text evidence="1">Belongs to the NAD-dependent DNA ligase family. LigA subfamily.</text>
</comment>
<accession>B0RZW0</accession>
<keyword id="KW-0227">DNA damage</keyword>
<keyword id="KW-0234">DNA repair</keyword>
<keyword id="KW-0235">DNA replication</keyword>
<keyword id="KW-0436">Ligase</keyword>
<keyword id="KW-0460">Magnesium</keyword>
<keyword id="KW-0464">Manganese</keyword>
<keyword id="KW-0479">Metal-binding</keyword>
<keyword id="KW-0520">NAD</keyword>
<keyword id="KW-1185">Reference proteome</keyword>
<keyword id="KW-0862">Zinc</keyword>
<gene>
    <name evidence="1" type="primary">ligA</name>
    <name type="ordered locus">FMG_0569</name>
</gene>
<proteinExistence type="inferred from homology"/>
<protein>
    <recommendedName>
        <fullName evidence="1">DNA ligase</fullName>
        <ecNumber evidence="1">6.5.1.2</ecNumber>
    </recommendedName>
    <alternativeName>
        <fullName evidence="1">Polydeoxyribonucleotide synthase [NAD(+)]</fullName>
    </alternativeName>
</protein>
<evidence type="ECO:0000255" key="1">
    <source>
        <dbReference type="HAMAP-Rule" id="MF_01588"/>
    </source>
</evidence>
<feature type="chain" id="PRO_0000380384" description="DNA ligase">
    <location>
        <begin position="1"/>
        <end position="662"/>
    </location>
</feature>
<feature type="domain" description="BRCT" evidence="1">
    <location>
        <begin position="583"/>
        <end position="662"/>
    </location>
</feature>
<feature type="active site" description="N6-AMP-lysine intermediate" evidence="1">
    <location>
        <position position="121"/>
    </location>
</feature>
<feature type="binding site" evidence="1">
    <location>
        <begin position="31"/>
        <end position="35"/>
    </location>
    <ligand>
        <name>NAD(+)</name>
        <dbReference type="ChEBI" id="CHEBI:57540"/>
    </ligand>
</feature>
<feature type="binding site" evidence="1">
    <location>
        <begin position="79"/>
        <end position="80"/>
    </location>
    <ligand>
        <name>NAD(+)</name>
        <dbReference type="ChEBI" id="CHEBI:57540"/>
    </ligand>
</feature>
<feature type="binding site" evidence="1">
    <location>
        <position position="119"/>
    </location>
    <ligand>
        <name>NAD(+)</name>
        <dbReference type="ChEBI" id="CHEBI:57540"/>
    </ligand>
</feature>
<feature type="binding site" evidence="1">
    <location>
        <position position="142"/>
    </location>
    <ligand>
        <name>NAD(+)</name>
        <dbReference type="ChEBI" id="CHEBI:57540"/>
    </ligand>
</feature>
<feature type="binding site" evidence="1">
    <location>
        <position position="176"/>
    </location>
    <ligand>
        <name>NAD(+)</name>
        <dbReference type="ChEBI" id="CHEBI:57540"/>
    </ligand>
</feature>
<feature type="binding site" evidence="1">
    <location>
        <position position="288"/>
    </location>
    <ligand>
        <name>NAD(+)</name>
        <dbReference type="ChEBI" id="CHEBI:57540"/>
    </ligand>
</feature>
<feature type="binding site" evidence="1">
    <location>
        <position position="312"/>
    </location>
    <ligand>
        <name>NAD(+)</name>
        <dbReference type="ChEBI" id="CHEBI:57540"/>
    </ligand>
</feature>
<feature type="binding site" evidence="1">
    <location>
        <position position="405"/>
    </location>
    <ligand>
        <name>Zn(2+)</name>
        <dbReference type="ChEBI" id="CHEBI:29105"/>
    </ligand>
</feature>
<feature type="binding site" evidence="1">
    <location>
        <position position="408"/>
    </location>
    <ligand>
        <name>Zn(2+)</name>
        <dbReference type="ChEBI" id="CHEBI:29105"/>
    </ligand>
</feature>
<feature type="binding site" evidence="1">
    <location>
        <position position="421"/>
    </location>
    <ligand>
        <name>Zn(2+)</name>
        <dbReference type="ChEBI" id="CHEBI:29105"/>
    </ligand>
</feature>
<feature type="binding site" evidence="1">
    <location>
        <position position="427"/>
    </location>
    <ligand>
        <name>Zn(2+)</name>
        <dbReference type="ChEBI" id="CHEBI:29105"/>
    </ligand>
</feature>
<dbReference type="EC" id="6.5.1.2" evidence="1"/>
<dbReference type="EMBL" id="AP008971">
    <property type="protein sequence ID" value="BAG07987.1"/>
    <property type="molecule type" value="Genomic_DNA"/>
</dbReference>
<dbReference type="RefSeq" id="WP_012290485.1">
    <property type="nucleotide sequence ID" value="NC_010376.1"/>
</dbReference>
<dbReference type="SMR" id="B0RZW0"/>
<dbReference type="STRING" id="334413.FMG_0569"/>
<dbReference type="KEGG" id="fma:FMG_0569"/>
<dbReference type="eggNOG" id="COG0272">
    <property type="taxonomic scope" value="Bacteria"/>
</dbReference>
<dbReference type="HOGENOM" id="CLU_007764_2_1_9"/>
<dbReference type="Proteomes" id="UP000001319">
    <property type="component" value="Chromosome"/>
</dbReference>
<dbReference type="GO" id="GO:0005829">
    <property type="term" value="C:cytosol"/>
    <property type="evidence" value="ECO:0007669"/>
    <property type="project" value="TreeGrafter"/>
</dbReference>
<dbReference type="GO" id="GO:0003677">
    <property type="term" value="F:DNA binding"/>
    <property type="evidence" value="ECO:0007669"/>
    <property type="project" value="InterPro"/>
</dbReference>
<dbReference type="GO" id="GO:0003911">
    <property type="term" value="F:DNA ligase (NAD+) activity"/>
    <property type="evidence" value="ECO:0007669"/>
    <property type="project" value="UniProtKB-UniRule"/>
</dbReference>
<dbReference type="GO" id="GO:0046872">
    <property type="term" value="F:metal ion binding"/>
    <property type="evidence" value="ECO:0007669"/>
    <property type="project" value="UniProtKB-KW"/>
</dbReference>
<dbReference type="GO" id="GO:0006281">
    <property type="term" value="P:DNA repair"/>
    <property type="evidence" value="ECO:0007669"/>
    <property type="project" value="UniProtKB-KW"/>
</dbReference>
<dbReference type="GO" id="GO:0006260">
    <property type="term" value="P:DNA replication"/>
    <property type="evidence" value="ECO:0007669"/>
    <property type="project" value="UniProtKB-KW"/>
</dbReference>
<dbReference type="CDD" id="cd17748">
    <property type="entry name" value="BRCT_DNA_ligase_like"/>
    <property type="match status" value="1"/>
</dbReference>
<dbReference type="CDD" id="cd00114">
    <property type="entry name" value="LIGANc"/>
    <property type="match status" value="1"/>
</dbReference>
<dbReference type="FunFam" id="1.10.150.20:FF:000006">
    <property type="entry name" value="DNA ligase"/>
    <property type="match status" value="1"/>
</dbReference>
<dbReference type="FunFam" id="1.10.150.20:FF:000007">
    <property type="entry name" value="DNA ligase"/>
    <property type="match status" value="1"/>
</dbReference>
<dbReference type="Gene3D" id="1.10.150.20">
    <property type="entry name" value="5' to 3' exonuclease, C-terminal subdomain"/>
    <property type="match status" value="2"/>
</dbReference>
<dbReference type="Gene3D" id="3.40.50.10190">
    <property type="entry name" value="BRCT domain"/>
    <property type="match status" value="1"/>
</dbReference>
<dbReference type="Gene3D" id="3.30.470.30">
    <property type="entry name" value="DNA ligase/mRNA capping enzyme"/>
    <property type="match status" value="1"/>
</dbReference>
<dbReference type="Gene3D" id="1.10.287.610">
    <property type="entry name" value="Helix hairpin bin"/>
    <property type="match status" value="1"/>
</dbReference>
<dbReference type="Gene3D" id="2.40.50.140">
    <property type="entry name" value="Nucleic acid-binding proteins"/>
    <property type="match status" value="1"/>
</dbReference>
<dbReference type="HAMAP" id="MF_01588">
    <property type="entry name" value="DNA_ligase_A"/>
    <property type="match status" value="1"/>
</dbReference>
<dbReference type="InterPro" id="IPR001357">
    <property type="entry name" value="BRCT_dom"/>
</dbReference>
<dbReference type="InterPro" id="IPR036420">
    <property type="entry name" value="BRCT_dom_sf"/>
</dbReference>
<dbReference type="InterPro" id="IPR041663">
    <property type="entry name" value="DisA/LigA_HHH"/>
</dbReference>
<dbReference type="InterPro" id="IPR001679">
    <property type="entry name" value="DNA_ligase"/>
</dbReference>
<dbReference type="InterPro" id="IPR033136">
    <property type="entry name" value="DNA_ligase_CS"/>
</dbReference>
<dbReference type="InterPro" id="IPR013839">
    <property type="entry name" value="DNAligase_adenylation"/>
</dbReference>
<dbReference type="InterPro" id="IPR013840">
    <property type="entry name" value="DNAligase_N"/>
</dbReference>
<dbReference type="InterPro" id="IPR003583">
    <property type="entry name" value="Hlx-hairpin-Hlx_DNA-bd_motif"/>
</dbReference>
<dbReference type="InterPro" id="IPR012340">
    <property type="entry name" value="NA-bd_OB-fold"/>
</dbReference>
<dbReference type="InterPro" id="IPR004150">
    <property type="entry name" value="NAD_DNA_ligase_OB"/>
</dbReference>
<dbReference type="InterPro" id="IPR010994">
    <property type="entry name" value="RuvA_2-like"/>
</dbReference>
<dbReference type="NCBIfam" id="TIGR00575">
    <property type="entry name" value="dnlj"/>
    <property type="match status" value="1"/>
</dbReference>
<dbReference type="NCBIfam" id="NF005932">
    <property type="entry name" value="PRK07956.1"/>
    <property type="match status" value="1"/>
</dbReference>
<dbReference type="PANTHER" id="PTHR23389">
    <property type="entry name" value="CHROMOSOME TRANSMISSION FIDELITY FACTOR 18"/>
    <property type="match status" value="1"/>
</dbReference>
<dbReference type="PANTHER" id="PTHR23389:SF9">
    <property type="entry name" value="DNA LIGASE"/>
    <property type="match status" value="1"/>
</dbReference>
<dbReference type="Pfam" id="PF00533">
    <property type="entry name" value="BRCT"/>
    <property type="match status" value="1"/>
</dbReference>
<dbReference type="Pfam" id="PF01653">
    <property type="entry name" value="DNA_ligase_aden"/>
    <property type="match status" value="1"/>
</dbReference>
<dbReference type="Pfam" id="PF03120">
    <property type="entry name" value="DNA_ligase_OB"/>
    <property type="match status" value="1"/>
</dbReference>
<dbReference type="Pfam" id="PF12826">
    <property type="entry name" value="HHH_2"/>
    <property type="match status" value="1"/>
</dbReference>
<dbReference type="Pfam" id="PF14520">
    <property type="entry name" value="HHH_5"/>
    <property type="match status" value="1"/>
</dbReference>
<dbReference type="PIRSF" id="PIRSF001604">
    <property type="entry name" value="LigA"/>
    <property type="match status" value="1"/>
</dbReference>
<dbReference type="SMART" id="SM00292">
    <property type="entry name" value="BRCT"/>
    <property type="match status" value="1"/>
</dbReference>
<dbReference type="SMART" id="SM00278">
    <property type="entry name" value="HhH1"/>
    <property type="match status" value="4"/>
</dbReference>
<dbReference type="SMART" id="SM00532">
    <property type="entry name" value="LIGANc"/>
    <property type="match status" value="1"/>
</dbReference>
<dbReference type="SUPFAM" id="SSF52113">
    <property type="entry name" value="BRCT domain"/>
    <property type="match status" value="1"/>
</dbReference>
<dbReference type="SUPFAM" id="SSF56091">
    <property type="entry name" value="DNA ligase/mRNA capping enzyme, catalytic domain"/>
    <property type="match status" value="1"/>
</dbReference>
<dbReference type="SUPFAM" id="SSF50249">
    <property type="entry name" value="Nucleic acid-binding proteins"/>
    <property type="match status" value="1"/>
</dbReference>
<dbReference type="SUPFAM" id="SSF47781">
    <property type="entry name" value="RuvA domain 2-like"/>
    <property type="match status" value="1"/>
</dbReference>
<dbReference type="PROSITE" id="PS50172">
    <property type="entry name" value="BRCT"/>
    <property type="match status" value="1"/>
</dbReference>
<dbReference type="PROSITE" id="PS01056">
    <property type="entry name" value="DNA_LIGASE_N2"/>
    <property type="match status" value="1"/>
</dbReference>
<name>DNLJ_FINM2</name>
<sequence>MEKQDRIKYLVDILNKYAYHYYTLDDPLIADSEYDVLYDELVNLEKETGIVLPNSPTNRIGGEVLSGFEKHEHLNTLYSLGKAQSKEEVRNWVDKTIEFVQNYNENHVNKLPKVEFYVEFKFDGLTVNLTYDGGYLVMATTRGNGTIGEVITSQVKTINSIPLKIKDTRLMEIQGEGVMPLSSLENYNKTHEPKLKNARNAAAGALRNLDPAVTRERNLDAYFYNVNYLQDNELETQEEMIKFLGDNYFKLYPYEKHATSFEEVSKFIDEIFELRNEIDVLTDGVVIKVNDFKTREKLGYTNKFPRWAIAYKFEPERFTTIVKEVEWNVGRTGKVTPTALLEPVEIGNVTVKRATLNNIDDIERKQVRLNSEVFVRRSNDVIPEIMGVVNPDQEDTEEIEIPHYCPYCHSELFRDGVHIFCPNSMSCTPQLVKRMVHFASRNAMNIDGLSEKTLEVLLEKLNIKSIEEIYDVKKEQLMQLDGFKEKKSQNLINAIEKSKNVDLANFIFALGIPEIGEKTSFELAQKYKSFDNLREAKFEELIQIEDIGNVIAEEIVEFFHDETISNSIDSLLSKGIKIKNPENIEKKLDNLTFVLTGSLVNYSRKELTDKLSNLGAKVSSSVSKNTDYVVYGEKAGSKLTKAKDLGVKLMTEDELNSFLDNL</sequence>
<reference key="1">
    <citation type="journal article" date="2008" name="DNA Res.">
        <title>Complete genome sequence of Finegoldia magna, an anaerobic opportunistic pathogen.</title>
        <authorList>
            <person name="Goto T."/>
            <person name="Yamashita A."/>
            <person name="Hirakawa H."/>
            <person name="Matsutani M."/>
            <person name="Todo K."/>
            <person name="Ohshima K."/>
            <person name="Toh H."/>
            <person name="Miyamoto K."/>
            <person name="Kuhara S."/>
            <person name="Hattori M."/>
            <person name="Shimizu T."/>
            <person name="Akimoto S."/>
        </authorList>
    </citation>
    <scope>NUCLEOTIDE SEQUENCE [LARGE SCALE GENOMIC DNA]</scope>
    <source>
        <strain>ATCC 29328 / DSM 20472 / WAL 2508</strain>
    </source>
</reference>